<keyword id="KW-0030">Aminoacyl-tRNA synthetase</keyword>
<keyword id="KW-0067">ATP-binding</keyword>
<keyword id="KW-0963">Cytoplasm</keyword>
<keyword id="KW-0436">Ligase</keyword>
<keyword id="KW-0479">Metal-binding</keyword>
<keyword id="KW-0547">Nucleotide-binding</keyword>
<keyword id="KW-0648">Protein biosynthesis</keyword>
<keyword id="KW-1185">Reference proteome</keyword>
<keyword id="KW-0694">RNA-binding</keyword>
<keyword id="KW-0820">tRNA-binding</keyword>
<keyword id="KW-0862">Zinc</keyword>
<name>SYA_XANOR</name>
<sequence>MNAPAKFSTSQIRSDFLAFFEGRGHTIVPSAPLVPGNDPTLLFTNSGMVQFKDVFLGAEKRSYVRAADVQRCLRAGGKHNDLDSVGYTARHHTFFEMLGNWSFGDYFKKDAIAWAWELLTQIWKLPTDRLLVTVYHTDEEAFALWRDMIGIPESRIVRIGDNKGAPYASDNFWQMADTGPCGPCTEIFFDHGDHIAGGPPGSPDEDGDRFIEIWNLVFMQFDRQPDGTLVPLPAPCVDTGMGLERLAAILQHVHTNYEIDLFQALIGKASALTGITDLENKSLRVIADHIRACSFLIVDGVLPSNEGRGYVLRRIIRRALRHGWMLGVRQPFFSKMVPTLVELMGEAYPELVVAKDTVARALLAEEERFAETLDAGMKIFDEVASRSQDIIPGADAFRLYDTYGFPVDLTADIARERGMRVDMEGFECAMERQRETARAAGKFGGGVALPADLVASMSPTVFLGYEAYDADALRVVALLKQGRPVERAQAGDEVIVFTDRTPFYAESGGQVGDSGQLNGPGVLIEVADTQKFAGQFHGHVGRISEGTLALGDVLAGGIDVQRRGKTILNHSATHLLHAALREVLGTHVQQKGSLVAPDRLRFDFSHFQPITADELAVIERKVNAEVRTNHGVEVHNMAMQEALDFGAMALFGEKYGENVRVLKMGGYSTELCGGTHVTRTGDIGLFKITSEGGVSSGVRRIEAVTGQGALDYVADEERRLLEAAHLLGGNATEVVDKVRALTERQKRLQRELESLKAKLASGATADLGAAAIDVAGVKVVAVRLEGFDAKALRDAMDRLKQQLGDSVIVLAGASGGKVALVSGVNGSPTGKVKAGELLSNIASQIGGKGGGRPDLAQGGGEDGPALATALDGVPLWVKQHLG</sequence>
<reference key="1">
    <citation type="journal article" date="2005" name="Nucleic Acids Res.">
        <title>The genome sequence of Xanthomonas oryzae pathovar oryzae KACC10331, the bacterial blight pathogen of rice.</title>
        <authorList>
            <person name="Lee B.-M."/>
            <person name="Park Y.-J."/>
            <person name="Park D.-S."/>
            <person name="Kang H.-W."/>
            <person name="Kim J.-G."/>
            <person name="Song E.-S."/>
            <person name="Park I.-C."/>
            <person name="Yoon U.-H."/>
            <person name="Hahn J.-H."/>
            <person name="Koo B.-S."/>
            <person name="Lee G.-B."/>
            <person name="Kim H."/>
            <person name="Park H.-S."/>
            <person name="Yoon K.-O."/>
            <person name="Kim J.-H."/>
            <person name="Jung C.-H."/>
            <person name="Koh N.-H."/>
            <person name="Seo J.-S."/>
            <person name="Go S.-J."/>
        </authorList>
    </citation>
    <scope>NUCLEOTIDE SEQUENCE [LARGE SCALE GENOMIC DNA]</scope>
    <source>
        <strain>KACC10331 / KXO85</strain>
    </source>
</reference>
<feature type="chain" id="PRO_0000075253" description="Alanine--tRNA ligase">
    <location>
        <begin position="1"/>
        <end position="882"/>
    </location>
</feature>
<feature type="binding site" evidence="1">
    <location>
        <position position="570"/>
    </location>
    <ligand>
        <name>Zn(2+)</name>
        <dbReference type="ChEBI" id="CHEBI:29105"/>
    </ligand>
</feature>
<feature type="binding site" evidence="1">
    <location>
        <position position="574"/>
    </location>
    <ligand>
        <name>Zn(2+)</name>
        <dbReference type="ChEBI" id="CHEBI:29105"/>
    </ligand>
</feature>
<feature type="binding site" evidence="1">
    <location>
        <position position="672"/>
    </location>
    <ligand>
        <name>Zn(2+)</name>
        <dbReference type="ChEBI" id="CHEBI:29105"/>
    </ligand>
</feature>
<feature type="binding site" evidence="1">
    <location>
        <position position="676"/>
    </location>
    <ligand>
        <name>Zn(2+)</name>
        <dbReference type="ChEBI" id="CHEBI:29105"/>
    </ligand>
</feature>
<protein>
    <recommendedName>
        <fullName evidence="1">Alanine--tRNA ligase</fullName>
        <ecNumber evidence="1">6.1.1.7</ecNumber>
    </recommendedName>
    <alternativeName>
        <fullName evidence="1">Alanyl-tRNA synthetase</fullName>
        <shortName evidence="1">AlaRS</shortName>
    </alternativeName>
</protein>
<organism>
    <name type="scientific">Xanthomonas oryzae pv. oryzae (strain KACC10331 / KXO85)</name>
    <dbReference type="NCBI Taxonomy" id="291331"/>
    <lineage>
        <taxon>Bacteria</taxon>
        <taxon>Pseudomonadati</taxon>
        <taxon>Pseudomonadota</taxon>
        <taxon>Gammaproteobacteria</taxon>
        <taxon>Lysobacterales</taxon>
        <taxon>Lysobacteraceae</taxon>
        <taxon>Xanthomonas</taxon>
    </lineage>
</organism>
<gene>
    <name evidence="1" type="primary">alaS</name>
    <name type="ordered locus">XOO2939</name>
</gene>
<accession>Q5GYM8</accession>
<evidence type="ECO:0000255" key="1">
    <source>
        <dbReference type="HAMAP-Rule" id="MF_00036"/>
    </source>
</evidence>
<dbReference type="EC" id="6.1.1.7" evidence="1"/>
<dbReference type="EMBL" id="AE013598">
    <property type="protein sequence ID" value="AAW76193.1"/>
    <property type="molecule type" value="Genomic_DNA"/>
</dbReference>
<dbReference type="SMR" id="Q5GYM8"/>
<dbReference type="STRING" id="291331.XOO2939"/>
<dbReference type="KEGG" id="xoo:XOO2939"/>
<dbReference type="PATRIC" id="fig|291331.8.peg.3255"/>
<dbReference type="HOGENOM" id="CLU_004485_1_1_6"/>
<dbReference type="Proteomes" id="UP000006735">
    <property type="component" value="Chromosome"/>
</dbReference>
<dbReference type="GO" id="GO:0005829">
    <property type="term" value="C:cytosol"/>
    <property type="evidence" value="ECO:0007669"/>
    <property type="project" value="TreeGrafter"/>
</dbReference>
<dbReference type="GO" id="GO:0004813">
    <property type="term" value="F:alanine-tRNA ligase activity"/>
    <property type="evidence" value="ECO:0007669"/>
    <property type="project" value="UniProtKB-UniRule"/>
</dbReference>
<dbReference type="GO" id="GO:0002161">
    <property type="term" value="F:aminoacyl-tRNA deacylase activity"/>
    <property type="evidence" value="ECO:0007669"/>
    <property type="project" value="TreeGrafter"/>
</dbReference>
<dbReference type="GO" id="GO:0005524">
    <property type="term" value="F:ATP binding"/>
    <property type="evidence" value="ECO:0007669"/>
    <property type="project" value="UniProtKB-UniRule"/>
</dbReference>
<dbReference type="GO" id="GO:0000049">
    <property type="term" value="F:tRNA binding"/>
    <property type="evidence" value="ECO:0007669"/>
    <property type="project" value="UniProtKB-KW"/>
</dbReference>
<dbReference type="GO" id="GO:0008270">
    <property type="term" value="F:zinc ion binding"/>
    <property type="evidence" value="ECO:0007669"/>
    <property type="project" value="UniProtKB-UniRule"/>
</dbReference>
<dbReference type="GO" id="GO:0006419">
    <property type="term" value="P:alanyl-tRNA aminoacylation"/>
    <property type="evidence" value="ECO:0007669"/>
    <property type="project" value="UniProtKB-UniRule"/>
</dbReference>
<dbReference type="GO" id="GO:0045892">
    <property type="term" value="P:negative regulation of DNA-templated transcription"/>
    <property type="evidence" value="ECO:0007669"/>
    <property type="project" value="TreeGrafter"/>
</dbReference>
<dbReference type="CDD" id="cd00673">
    <property type="entry name" value="AlaRS_core"/>
    <property type="match status" value="1"/>
</dbReference>
<dbReference type="FunFam" id="3.10.310.40:FF:000001">
    <property type="entry name" value="Alanine--tRNA ligase"/>
    <property type="match status" value="1"/>
</dbReference>
<dbReference type="FunFam" id="3.30.54.20:FF:000001">
    <property type="entry name" value="Alanine--tRNA ligase"/>
    <property type="match status" value="1"/>
</dbReference>
<dbReference type="FunFam" id="3.30.930.10:FF:000004">
    <property type="entry name" value="Alanine--tRNA ligase"/>
    <property type="match status" value="1"/>
</dbReference>
<dbReference type="FunFam" id="3.30.980.10:FF:000004">
    <property type="entry name" value="Alanine--tRNA ligase, cytoplasmic"/>
    <property type="match status" value="1"/>
</dbReference>
<dbReference type="Gene3D" id="2.40.30.130">
    <property type="match status" value="1"/>
</dbReference>
<dbReference type="Gene3D" id="3.10.310.40">
    <property type="match status" value="1"/>
</dbReference>
<dbReference type="Gene3D" id="3.30.54.20">
    <property type="match status" value="1"/>
</dbReference>
<dbReference type="Gene3D" id="6.10.250.550">
    <property type="match status" value="1"/>
</dbReference>
<dbReference type="Gene3D" id="3.30.930.10">
    <property type="entry name" value="Bira Bifunctional Protein, Domain 2"/>
    <property type="match status" value="1"/>
</dbReference>
<dbReference type="Gene3D" id="3.30.980.10">
    <property type="entry name" value="Threonyl-trna Synthetase, Chain A, domain 2"/>
    <property type="match status" value="1"/>
</dbReference>
<dbReference type="HAMAP" id="MF_00036_B">
    <property type="entry name" value="Ala_tRNA_synth_B"/>
    <property type="match status" value="1"/>
</dbReference>
<dbReference type="InterPro" id="IPR045864">
    <property type="entry name" value="aa-tRNA-synth_II/BPL/LPL"/>
</dbReference>
<dbReference type="InterPro" id="IPR002318">
    <property type="entry name" value="Ala-tRNA-lgiase_IIc"/>
</dbReference>
<dbReference type="InterPro" id="IPR018162">
    <property type="entry name" value="Ala-tRNA-ligase_IIc_anticod-bd"/>
</dbReference>
<dbReference type="InterPro" id="IPR018165">
    <property type="entry name" value="Ala-tRNA-synth_IIc_core"/>
</dbReference>
<dbReference type="InterPro" id="IPR018164">
    <property type="entry name" value="Ala-tRNA-synth_IIc_N"/>
</dbReference>
<dbReference type="InterPro" id="IPR050058">
    <property type="entry name" value="Ala-tRNA_ligase"/>
</dbReference>
<dbReference type="InterPro" id="IPR023033">
    <property type="entry name" value="Ala_tRNA_ligase_euk/bac"/>
</dbReference>
<dbReference type="InterPro" id="IPR003156">
    <property type="entry name" value="DHHA1_dom"/>
</dbReference>
<dbReference type="InterPro" id="IPR018163">
    <property type="entry name" value="Thr/Ala-tRNA-synth_IIc_edit"/>
</dbReference>
<dbReference type="InterPro" id="IPR009000">
    <property type="entry name" value="Transl_B-barrel_sf"/>
</dbReference>
<dbReference type="InterPro" id="IPR012947">
    <property type="entry name" value="tRNA_SAD"/>
</dbReference>
<dbReference type="NCBIfam" id="TIGR00344">
    <property type="entry name" value="alaS"/>
    <property type="match status" value="1"/>
</dbReference>
<dbReference type="PANTHER" id="PTHR11777:SF9">
    <property type="entry name" value="ALANINE--TRNA LIGASE, CYTOPLASMIC"/>
    <property type="match status" value="1"/>
</dbReference>
<dbReference type="PANTHER" id="PTHR11777">
    <property type="entry name" value="ALANYL-TRNA SYNTHETASE"/>
    <property type="match status" value="1"/>
</dbReference>
<dbReference type="Pfam" id="PF02272">
    <property type="entry name" value="DHHA1"/>
    <property type="match status" value="1"/>
</dbReference>
<dbReference type="Pfam" id="PF01411">
    <property type="entry name" value="tRNA-synt_2c"/>
    <property type="match status" value="1"/>
</dbReference>
<dbReference type="Pfam" id="PF07973">
    <property type="entry name" value="tRNA_SAD"/>
    <property type="match status" value="1"/>
</dbReference>
<dbReference type="PRINTS" id="PR00980">
    <property type="entry name" value="TRNASYNTHALA"/>
</dbReference>
<dbReference type="SMART" id="SM00863">
    <property type="entry name" value="tRNA_SAD"/>
    <property type="match status" value="1"/>
</dbReference>
<dbReference type="SUPFAM" id="SSF55681">
    <property type="entry name" value="Class II aaRS and biotin synthetases"/>
    <property type="match status" value="1"/>
</dbReference>
<dbReference type="SUPFAM" id="SSF101353">
    <property type="entry name" value="Putative anticodon-binding domain of alanyl-tRNA synthetase (AlaRS)"/>
    <property type="match status" value="1"/>
</dbReference>
<dbReference type="SUPFAM" id="SSF55186">
    <property type="entry name" value="ThrRS/AlaRS common domain"/>
    <property type="match status" value="1"/>
</dbReference>
<dbReference type="SUPFAM" id="SSF50447">
    <property type="entry name" value="Translation proteins"/>
    <property type="match status" value="1"/>
</dbReference>
<dbReference type="PROSITE" id="PS50860">
    <property type="entry name" value="AA_TRNA_LIGASE_II_ALA"/>
    <property type="match status" value="1"/>
</dbReference>
<proteinExistence type="inferred from homology"/>
<comment type="function">
    <text evidence="1">Catalyzes the attachment of alanine to tRNA(Ala) in a two-step reaction: alanine is first activated by ATP to form Ala-AMP and then transferred to the acceptor end of tRNA(Ala). Also edits incorrectly charged Ser-tRNA(Ala) and Gly-tRNA(Ala) via its editing domain.</text>
</comment>
<comment type="catalytic activity">
    <reaction evidence="1">
        <text>tRNA(Ala) + L-alanine + ATP = L-alanyl-tRNA(Ala) + AMP + diphosphate</text>
        <dbReference type="Rhea" id="RHEA:12540"/>
        <dbReference type="Rhea" id="RHEA-COMP:9657"/>
        <dbReference type="Rhea" id="RHEA-COMP:9923"/>
        <dbReference type="ChEBI" id="CHEBI:30616"/>
        <dbReference type="ChEBI" id="CHEBI:33019"/>
        <dbReference type="ChEBI" id="CHEBI:57972"/>
        <dbReference type="ChEBI" id="CHEBI:78442"/>
        <dbReference type="ChEBI" id="CHEBI:78497"/>
        <dbReference type="ChEBI" id="CHEBI:456215"/>
        <dbReference type="EC" id="6.1.1.7"/>
    </reaction>
</comment>
<comment type="cofactor">
    <cofactor evidence="1">
        <name>Zn(2+)</name>
        <dbReference type="ChEBI" id="CHEBI:29105"/>
    </cofactor>
    <text evidence="1">Binds 1 zinc ion per subunit.</text>
</comment>
<comment type="subcellular location">
    <subcellularLocation>
        <location evidence="1">Cytoplasm</location>
    </subcellularLocation>
</comment>
<comment type="domain">
    <text evidence="1">Consists of three domains; the N-terminal catalytic domain, the editing domain and the C-terminal C-Ala domain. The editing domain removes incorrectly charged amino acids, while the C-Ala domain, along with tRNA(Ala), serves as a bridge to cooperatively bring together the editing and aminoacylation centers thus stimulating deacylation of misacylated tRNAs.</text>
</comment>
<comment type="similarity">
    <text evidence="1">Belongs to the class-II aminoacyl-tRNA synthetase family.</text>
</comment>